<name>PLSX_CAMFF</name>
<protein>
    <recommendedName>
        <fullName evidence="1">Phosphate acyltransferase</fullName>
        <ecNumber evidence="1">2.3.1.274</ecNumber>
    </recommendedName>
    <alternativeName>
        <fullName evidence="1">Acyl-ACP phosphotransacylase</fullName>
    </alternativeName>
    <alternativeName>
        <fullName evidence="1">Acyl-[acyl-carrier-protein]--phosphate acyltransferase</fullName>
    </alternativeName>
    <alternativeName>
        <fullName evidence="1">Phosphate-acyl-ACP acyltransferase</fullName>
    </alternativeName>
</protein>
<proteinExistence type="inferred from homology"/>
<comment type="function">
    <text evidence="1">Catalyzes the reversible formation of acyl-phosphate (acyl-PO(4)) from acyl-[acyl-carrier-protein] (acyl-ACP). This enzyme utilizes acyl-ACP as fatty acyl donor, but not acyl-CoA.</text>
</comment>
<comment type="catalytic activity">
    <reaction evidence="1">
        <text>a fatty acyl-[ACP] + phosphate = an acyl phosphate + holo-[ACP]</text>
        <dbReference type="Rhea" id="RHEA:42292"/>
        <dbReference type="Rhea" id="RHEA-COMP:9685"/>
        <dbReference type="Rhea" id="RHEA-COMP:14125"/>
        <dbReference type="ChEBI" id="CHEBI:43474"/>
        <dbReference type="ChEBI" id="CHEBI:59918"/>
        <dbReference type="ChEBI" id="CHEBI:64479"/>
        <dbReference type="ChEBI" id="CHEBI:138651"/>
        <dbReference type="EC" id="2.3.1.274"/>
    </reaction>
</comment>
<comment type="pathway">
    <text evidence="1">Lipid metabolism; phospholipid metabolism.</text>
</comment>
<comment type="subunit">
    <text evidence="1">Homodimer. Probably interacts with PlsY.</text>
</comment>
<comment type="subcellular location">
    <subcellularLocation>
        <location evidence="1">Cytoplasm</location>
    </subcellularLocation>
    <text evidence="1">Associated with the membrane possibly through PlsY.</text>
</comment>
<comment type="similarity">
    <text evidence="1">Belongs to the PlsX family.</text>
</comment>
<keyword id="KW-0963">Cytoplasm</keyword>
<keyword id="KW-0444">Lipid biosynthesis</keyword>
<keyword id="KW-0443">Lipid metabolism</keyword>
<keyword id="KW-0594">Phospholipid biosynthesis</keyword>
<keyword id="KW-1208">Phospholipid metabolism</keyword>
<keyword id="KW-0808">Transferase</keyword>
<gene>
    <name evidence="1" type="primary">plsX</name>
    <name type="ordered locus">CFF8240_0236</name>
</gene>
<feature type="chain" id="PRO_1000001741" description="Phosphate acyltransferase">
    <location>
        <begin position="1"/>
        <end position="329"/>
    </location>
</feature>
<evidence type="ECO:0000255" key="1">
    <source>
        <dbReference type="HAMAP-Rule" id="MF_00019"/>
    </source>
</evidence>
<reference key="1">
    <citation type="submission" date="2006-11" db="EMBL/GenBank/DDBJ databases">
        <title>Sequence of Campylobacter fetus subsp. fetus 82-40.</title>
        <authorList>
            <person name="Fouts D.E."/>
            <person name="Nelson K.E."/>
        </authorList>
    </citation>
    <scope>NUCLEOTIDE SEQUENCE [LARGE SCALE GENOMIC DNA]</scope>
    <source>
        <strain>82-40</strain>
    </source>
</reference>
<organism>
    <name type="scientific">Campylobacter fetus subsp. fetus (strain 82-40)</name>
    <dbReference type="NCBI Taxonomy" id="360106"/>
    <lineage>
        <taxon>Bacteria</taxon>
        <taxon>Pseudomonadati</taxon>
        <taxon>Campylobacterota</taxon>
        <taxon>Epsilonproteobacteria</taxon>
        <taxon>Campylobacterales</taxon>
        <taxon>Campylobacteraceae</taxon>
        <taxon>Campylobacter</taxon>
    </lineage>
</organism>
<accession>A0RMK7</accession>
<sequence length="329" mass="35578">MISIAIDAMGGDFGPEPIITGVLDALKHRSFNAVLVGDIQKIKPLIPEDYARFVTYIESSEVFSMGESATDALKRKESSIFKAIELVKNGECKAIVSAGHSGATMSLATLRIGRLKNVARPAIATLMPTSLNKKTLVLDVGANVDCKAEHLFQFAIMGESYAKQIMRVKNPKVGLLSNGEEDCKGNEVTKEAFEMMSKLDSFIGNVEGNQIFDGSVDVIICDGFVGNILLKTSEGVASAISKIIKESVKKSPFATVGALLMKRVFKALKIQIDYDEYGGAPLLGVKDCVIISHGKSSPKAVKNAIFQALKFAESDINRVIEDELSHFVR</sequence>
<dbReference type="EC" id="2.3.1.274" evidence="1"/>
<dbReference type="EMBL" id="CP000487">
    <property type="protein sequence ID" value="ABK82635.1"/>
    <property type="molecule type" value="Genomic_DNA"/>
</dbReference>
<dbReference type="RefSeq" id="WP_011731747.1">
    <property type="nucleotide sequence ID" value="NC_008599.1"/>
</dbReference>
<dbReference type="SMR" id="A0RMK7"/>
<dbReference type="GeneID" id="61064080"/>
<dbReference type="KEGG" id="cff:CFF8240_0236"/>
<dbReference type="eggNOG" id="COG0416">
    <property type="taxonomic scope" value="Bacteria"/>
</dbReference>
<dbReference type="HOGENOM" id="CLU_039379_1_1_7"/>
<dbReference type="UniPathway" id="UPA00085"/>
<dbReference type="Proteomes" id="UP000000760">
    <property type="component" value="Chromosome"/>
</dbReference>
<dbReference type="GO" id="GO:0005737">
    <property type="term" value="C:cytoplasm"/>
    <property type="evidence" value="ECO:0007669"/>
    <property type="project" value="UniProtKB-SubCell"/>
</dbReference>
<dbReference type="GO" id="GO:0043811">
    <property type="term" value="F:phosphate:acyl-[acyl carrier protein] acyltransferase activity"/>
    <property type="evidence" value="ECO:0007669"/>
    <property type="project" value="UniProtKB-UniRule"/>
</dbReference>
<dbReference type="GO" id="GO:0006633">
    <property type="term" value="P:fatty acid biosynthetic process"/>
    <property type="evidence" value="ECO:0007669"/>
    <property type="project" value="UniProtKB-UniRule"/>
</dbReference>
<dbReference type="GO" id="GO:0008654">
    <property type="term" value="P:phospholipid biosynthetic process"/>
    <property type="evidence" value="ECO:0007669"/>
    <property type="project" value="UniProtKB-KW"/>
</dbReference>
<dbReference type="Gene3D" id="3.40.718.10">
    <property type="entry name" value="Isopropylmalate Dehydrogenase"/>
    <property type="match status" value="1"/>
</dbReference>
<dbReference type="HAMAP" id="MF_00019">
    <property type="entry name" value="PlsX"/>
    <property type="match status" value="1"/>
</dbReference>
<dbReference type="InterPro" id="IPR003664">
    <property type="entry name" value="FA_synthesis"/>
</dbReference>
<dbReference type="InterPro" id="IPR012281">
    <property type="entry name" value="Phospholipid_synth_PlsX-like"/>
</dbReference>
<dbReference type="NCBIfam" id="TIGR00182">
    <property type="entry name" value="plsX"/>
    <property type="match status" value="1"/>
</dbReference>
<dbReference type="PANTHER" id="PTHR30100">
    <property type="entry name" value="FATTY ACID/PHOSPHOLIPID SYNTHESIS PROTEIN PLSX"/>
    <property type="match status" value="1"/>
</dbReference>
<dbReference type="PANTHER" id="PTHR30100:SF1">
    <property type="entry name" value="PHOSPHATE ACYLTRANSFERASE"/>
    <property type="match status" value="1"/>
</dbReference>
<dbReference type="Pfam" id="PF02504">
    <property type="entry name" value="FA_synthesis"/>
    <property type="match status" value="1"/>
</dbReference>
<dbReference type="PIRSF" id="PIRSF002465">
    <property type="entry name" value="Phsphlp_syn_PlsX"/>
    <property type="match status" value="1"/>
</dbReference>
<dbReference type="SUPFAM" id="SSF53659">
    <property type="entry name" value="Isocitrate/Isopropylmalate dehydrogenase-like"/>
    <property type="match status" value="1"/>
</dbReference>